<reference key="1">
    <citation type="journal article" date="2003" name="Nature">
        <title>The genome sequence of Bacillus anthracis Ames and comparison to closely related bacteria.</title>
        <authorList>
            <person name="Read T.D."/>
            <person name="Peterson S.N."/>
            <person name="Tourasse N.J."/>
            <person name="Baillie L.W."/>
            <person name="Paulsen I.T."/>
            <person name="Nelson K.E."/>
            <person name="Tettelin H."/>
            <person name="Fouts D.E."/>
            <person name="Eisen J.A."/>
            <person name="Gill S.R."/>
            <person name="Holtzapple E.K."/>
            <person name="Okstad O.A."/>
            <person name="Helgason E."/>
            <person name="Rilstone J."/>
            <person name="Wu M."/>
            <person name="Kolonay J.F."/>
            <person name="Beanan M.J."/>
            <person name="Dodson R.J."/>
            <person name="Brinkac L.M."/>
            <person name="Gwinn M.L."/>
            <person name="DeBoy R.T."/>
            <person name="Madpu R."/>
            <person name="Daugherty S.C."/>
            <person name="Durkin A.S."/>
            <person name="Haft D.H."/>
            <person name="Nelson W.C."/>
            <person name="Peterson J.D."/>
            <person name="Pop M."/>
            <person name="Khouri H.M."/>
            <person name="Radune D."/>
            <person name="Benton J.L."/>
            <person name="Mahamoud Y."/>
            <person name="Jiang L."/>
            <person name="Hance I.R."/>
            <person name="Weidman J.F."/>
            <person name="Berry K.J."/>
            <person name="Plaut R.D."/>
            <person name="Wolf A.M."/>
            <person name="Watkins K.L."/>
            <person name="Nierman W.C."/>
            <person name="Hazen A."/>
            <person name="Cline R.T."/>
            <person name="Redmond C."/>
            <person name="Thwaite J.E."/>
            <person name="White O."/>
            <person name="Salzberg S.L."/>
            <person name="Thomason B."/>
            <person name="Friedlander A.M."/>
            <person name="Koehler T.M."/>
            <person name="Hanna P.C."/>
            <person name="Kolstoe A.-B."/>
            <person name="Fraser C.M."/>
        </authorList>
    </citation>
    <scope>NUCLEOTIDE SEQUENCE [LARGE SCALE GENOMIC DNA]</scope>
    <source>
        <strain>Ames / isolate Porton</strain>
    </source>
</reference>
<reference key="2">
    <citation type="journal article" date="2009" name="J. Bacteriol.">
        <title>The complete genome sequence of Bacillus anthracis Ames 'Ancestor'.</title>
        <authorList>
            <person name="Ravel J."/>
            <person name="Jiang L."/>
            <person name="Stanley S.T."/>
            <person name="Wilson M.R."/>
            <person name="Decker R.S."/>
            <person name="Read T.D."/>
            <person name="Worsham P."/>
            <person name="Keim P.S."/>
            <person name="Salzberg S.L."/>
            <person name="Fraser-Liggett C.M."/>
            <person name="Rasko D.A."/>
        </authorList>
    </citation>
    <scope>NUCLEOTIDE SEQUENCE [LARGE SCALE GENOMIC DNA]</scope>
    <source>
        <strain>Ames ancestor</strain>
    </source>
</reference>
<reference key="3">
    <citation type="submission" date="2004-01" db="EMBL/GenBank/DDBJ databases">
        <title>Complete genome sequence of Bacillus anthracis Sterne.</title>
        <authorList>
            <person name="Brettin T.S."/>
            <person name="Bruce D."/>
            <person name="Challacombe J.F."/>
            <person name="Gilna P."/>
            <person name="Han C."/>
            <person name="Hill K."/>
            <person name="Hitchcock P."/>
            <person name="Jackson P."/>
            <person name="Keim P."/>
            <person name="Longmire J."/>
            <person name="Lucas S."/>
            <person name="Okinaka R."/>
            <person name="Richardson P."/>
            <person name="Rubin E."/>
            <person name="Tice H."/>
        </authorList>
    </citation>
    <scope>NUCLEOTIDE SEQUENCE [LARGE SCALE GENOMIC DNA]</scope>
    <source>
        <strain>Sterne</strain>
    </source>
</reference>
<keyword id="KW-0963">Cytoplasm</keyword>
<keyword id="KW-0489">Methyltransferase</keyword>
<keyword id="KW-1185">Reference proteome</keyword>
<keyword id="KW-0949">S-adenosyl-L-methionine</keyword>
<keyword id="KW-0808">Transferase</keyword>
<keyword id="KW-0819">tRNA processing</keyword>
<organism>
    <name type="scientific">Bacillus anthracis</name>
    <dbReference type="NCBI Taxonomy" id="1392"/>
    <lineage>
        <taxon>Bacteria</taxon>
        <taxon>Bacillati</taxon>
        <taxon>Bacillota</taxon>
        <taxon>Bacilli</taxon>
        <taxon>Bacillales</taxon>
        <taxon>Bacillaceae</taxon>
        <taxon>Bacillus</taxon>
        <taxon>Bacillus cereus group</taxon>
    </lineage>
</organism>
<accession>Q81JG7</accession>
<accession>Q6HUP5</accession>
<accession>Q6KNX8</accession>
<comment type="function">
    <text evidence="1">Specifically methylates guanosine-37 in various tRNAs.</text>
</comment>
<comment type="catalytic activity">
    <reaction evidence="1">
        <text>guanosine(37) in tRNA + S-adenosyl-L-methionine = N(1)-methylguanosine(37) in tRNA + S-adenosyl-L-homocysteine + H(+)</text>
        <dbReference type="Rhea" id="RHEA:36899"/>
        <dbReference type="Rhea" id="RHEA-COMP:10145"/>
        <dbReference type="Rhea" id="RHEA-COMP:10147"/>
        <dbReference type="ChEBI" id="CHEBI:15378"/>
        <dbReference type="ChEBI" id="CHEBI:57856"/>
        <dbReference type="ChEBI" id="CHEBI:59789"/>
        <dbReference type="ChEBI" id="CHEBI:73542"/>
        <dbReference type="ChEBI" id="CHEBI:74269"/>
        <dbReference type="EC" id="2.1.1.228"/>
    </reaction>
</comment>
<comment type="subunit">
    <text evidence="1">Homodimer.</text>
</comment>
<comment type="subcellular location">
    <subcellularLocation>
        <location evidence="1">Cytoplasm</location>
    </subcellularLocation>
</comment>
<comment type="similarity">
    <text evidence="1">Belongs to the RNA methyltransferase TrmD family.</text>
</comment>
<name>TRMD_BACAN</name>
<feature type="chain" id="PRO_0000060319" description="tRNA (guanine-N(1)-)-methyltransferase">
    <location>
        <begin position="1"/>
        <end position="244"/>
    </location>
</feature>
<feature type="binding site" evidence="1">
    <location>
        <position position="113"/>
    </location>
    <ligand>
        <name>S-adenosyl-L-methionine</name>
        <dbReference type="ChEBI" id="CHEBI:59789"/>
    </ligand>
</feature>
<feature type="binding site" evidence="1">
    <location>
        <begin position="133"/>
        <end position="138"/>
    </location>
    <ligand>
        <name>S-adenosyl-L-methionine</name>
        <dbReference type="ChEBI" id="CHEBI:59789"/>
    </ligand>
</feature>
<sequence>MKIDILTLFPDMFTGVFGSSILKKAQEKEAVELRVVNFRDYTTSKHNSVDDYPYGGGAGMVLTPQPIFDAVEDLTKETERKPRVVLMCPQGERFTQKKAEELAEEEHLIFVCGHYEGYDERIREHLVTDEISIGDYVLTGGELASMVITDSVVRLLPGVLGNHASQVEDSFSTGLLEHPHYTRPADFRGMKVPDVLMSGNHKNIDEWRHKESLRRTYTRRPDLLEERELSKQEKKWLEQIKEGK</sequence>
<gene>
    <name evidence="1" type="primary">trmD</name>
    <name type="ordered locus">BA_3979</name>
    <name type="ordered locus">GBAA_3979</name>
    <name type="ordered locus">BAS3692</name>
</gene>
<evidence type="ECO:0000255" key="1">
    <source>
        <dbReference type="HAMAP-Rule" id="MF_00605"/>
    </source>
</evidence>
<dbReference type="EC" id="2.1.1.228" evidence="1"/>
<dbReference type="EMBL" id="AE016879">
    <property type="protein sequence ID" value="AAP27707.1"/>
    <property type="molecule type" value="Genomic_DNA"/>
</dbReference>
<dbReference type="EMBL" id="AE017334">
    <property type="protein sequence ID" value="AAT33093.1"/>
    <property type="molecule type" value="Genomic_DNA"/>
</dbReference>
<dbReference type="EMBL" id="AE017225">
    <property type="protein sequence ID" value="AAT55994.1"/>
    <property type="molecule type" value="Genomic_DNA"/>
</dbReference>
<dbReference type="RefSeq" id="NP_846221.1">
    <property type="nucleotide sequence ID" value="NC_003997.3"/>
</dbReference>
<dbReference type="RefSeq" id="WP_000686892.1">
    <property type="nucleotide sequence ID" value="NZ_WXXJ01000026.1"/>
</dbReference>
<dbReference type="RefSeq" id="YP_029943.1">
    <property type="nucleotide sequence ID" value="NC_005945.1"/>
</dbReference>
<dbReference type="SMR" id="Q81JG7"/>
<dbReference type="STRING" id="261594.GBAA_3979"/>
<dbReference type="DNASU" id="1086804"/>
<dbReference type="GeneID" id="93007271"/>
<dbReference type="KEGG" id="ban:BA_3979"/>
<dbReference type="KEGG" id="banh:HYU01_19445"/>
<dbReference type="KEGG" id="bar:GBAA_3979"/>
<dbReference type="KEGG" id="bat:BAS3692"/>
<dbReference type="PATRIC" id="fig|198094.11.peg.3949"/>
<dbReference type="eggNOG" id="COG0336">
    <property type="taxonomic scope" value="Bacteria"/>
</dbReference>
<dbReference type="HOGENOM" id="CLU_047363_0_1_9"/>
<dbReference type="OMA" id="ILCGHYK"/>
<dbReference type="OrthoDB" id="9807416at2"/>
<dbReference type="Proteomes" id="UP000000427">
    <property type="component" value="Chromosome"/>
</dbReference>
<dbReference type="Proteomes" id="UP000000594">
    <property type="component" value="Chromosome"/>
</dbReference>
<dbReference type="GO" id="GO:0005829">
    <property type="term" value="C:cytosol"/>
    <property type="evidence" value="ECO:0007669"/>
    <property type="project" value="TreeGrafter"/>
</dbReference>
<dbReference type="GO" id="GO:0052906">
    <property type="term" value="F:tRNA (guanine(37)-N1)-methyltransferase activity"/>
    <property type="evidence" value="ECO:0007669"/>
    <property type="project" value="UniProtKB-UniRule"/>
</dbReference>
<dbReference type="GO" id="GO:0002939">
    <property type="term" value="P:tRNA N1-guanine methylation"/>
    <property type="evidence" value="ECO:0007669"/>
    <property type="project" value="TreeGrafter"/>
</dbReference>
<dbReference type="CDD" id="cd18080">
    <property type="entry name" value="TrmD-like"/>
    <property type="match status" value="1"/>
</dbReference>
<dbReference type="FunFam" id="1.10.1270.20:FF:000001">
    <property type="entry name" value="tRNA (guanine-N(1)-)-methyltransferase"/>
    <property type="match status" value="1"/>
</dbReference>
<dbReference type="FunFam" id="3.40.1280.10:FF:000001">
    <property type="entry name" value="tRNA (guanine-N(1)-)-methyltransferase"/>
    <property type="match status" value="1"/>
</dbReference>
<dbReference type="Gene3D" id="3.40.1280.10">
    <property type="match status" value="1"/>
</dbReference>
<dbReference type="Gene3D" id="1.10.1270.20">
    <property type="entry name" value="tRNA(m1g37)methyltransferase, domain 2"/>
    <property type="match status" value="1"/>
</dbReference>
<dbReference type="HAMAP" id="MF_00605">
    <property type="entry name" value="TrmD"/>
    <property type="match status" value="1"/>
</dbReference>
<dbReference type="InterPro" id="IPR029028">
    <property type="entry name" value="Alpha/beta_knot_MTases"/>
</dbReference>
<dbReference type="InterPro" id="IPR023148">
    <property type="entry name" value="tRNA_m1G_MeTrfase_C_sf"/>
</dbReference>
<dbReference type="InterPro" id="IPR002649">
    <property type="entry name" value="tRNA_m1G_MeTrfase_TrmD"/>
</dbReference>
<dbReference type="InterPro" id="IPR029026">
    <property type="entry name" value="tRNA_m1G_MTases_N"/>
</dbReference>
<dbReference type="InterPro" id="IPR016009">
    <property type="entry name" value="tRNA_MeTrfase_TRMD/TRM10"/>
</dbReference>
<dbReference type="NCBIfam" id="NF000648">
    <property type="entry name" value="PRK00026.1"/>
    <property type="match status" value="1"/>
</dbReference>
<dbReference type="NCBIfam" id="TIGR00088">
    <property type="entry name" value="trmD"/>
    <property type="match status" value="1"/>
</dbReference>
<dbReference type="PANTHER" id="PTHR46417">
    <property type="entry name" value="TRNA (GUANINE-N(1)-)-METHYLTRANSFERASE"/>
    <property type="match status" value="1"/>
</dbReference>
<dbReference type="PANTHER" id="PTHR46417:SF1">
    <property type="entry name" value="TRNA (GUANINE-N(1)-)-METHYLTRANSFERASE"/>
    <property type="match status" value="1"/>
</dbReference>
<dbReference type="Pfam" id="PF01746">
    <property type="entry name" value="tRNA_m1G_MT"/>
    <property type="match status" value="1"/>
</dbReference>
<dbReference type="PIRSF" id="PIRSF000386">
    <property type="entry name" value="tRNA_mtase"/>
    <property type="match status" value="1"/>
</dbReference>
<dbReference type="SUPFAM" id="SSF75217">
    <property type="entry name" value="alpha/beta knot"/>
    <property type="match status" value="1"/>
</dbReference>
<proteinExistence type="inferred from homology"/>
<protein>
    <recommendedName>
        <fullName evidence="1">tRNA (guanine-N(1)-)-methyltransferase</fullName>
        <ecNumber evidence="1">2.1.1.228</ecNumber>
    </recommendedName>
    <alternativeName>
        <fullName evidence="1">M1G-methyltransferase</fullName>
    </alternativeName>
    <alternativeName>
        <fullName evidence="1">tRNA [GM37] methyltransferase</fullName>
    </alternativeName>
</protein>